<comment type="function">
    <text evidence="1">Catalyzes the formation of 6,7-dimethyl-8-ribityllumazine by condensation of 5-amino-6-(D-ribitylamino)uracil with 3,4-dihydroxy-2-butanone 4-phosphate. This is the penultimate step in the biosynthesis of riboflavin.</text>
</comment>
<comment type="catalytic activity">
    <reaction evidence="1">
        <text>(2S)-2-hydroxy-3-oxobutyl phosphate + 5-amino-6-(D-ribitylamino)uracil = 6,7-dimethyl-8-(1-D-ribityl)lumazine + phosphate + 2 H2O + H(+)</text>
        <dbReference type="Rhea" id="RHEA:26152"/>
        <dbReference type="ChEBI" id="CHEBI:15377"/>
        <dbReference type="ChEBI" id="CHEBI:15378"/>
        <dbReference type="ChEBI" id="CHEBI:15934"/>
        <dbReference type="ChEBI" id="CHEBI:43474"/>
        <dbReference type="ChEBI" id="CHEBI:58201"/>
        <dbReference type="ChEBI" id="CHEBI:58830"/>
        <dbReference type="EC" id="2.5.1.78"/>
    </reaction>
</comment>
<comment type="pathway">
    <text evidence="1">Cofactor biosynthesis; riboflavin biosynthesis; riboflavin from 2-hydroxy-3-oxobutyl phosphate and 5-amino-6-(D-ribitylamino)uracil: step 1/2.</text>
</comment>
<comment type="subunit">
    <text evidence="1">Homopentamer.</text>
</comment>
<comment type="similarity">
    <text evidence="1">Belongs to the DMRL synthase family.</text>
</comment>
<feature type="chain" id="PRO_1000040458" description="6,7-dimethyl-8-ribityllumazine synthase">
    <location>
        <begin position="1"/>
        <end position="160"/>
    </location>
</feature>
<feature type="active site" description="Proton donor" evidence="1">
    <location>
        <position position="89"/>
    </location>
</feature>
<feature type="binding site" evidence="1">
    <location>
        <position position="27"/>
    </location>
    <ligand>
        <name>5-amino-6-(D-ribitylamino)uracil</name>
        <dbReference type="ChEBI" id="CHEBI:15934"/>
    </ligand>
</feature>
<feature type="binding site" evidence="1">
    <location>
        <begin position="59"/>
        <end position="61"/>
    </location>
    <ligand>
        <name>5-amino-6-(D-ribitylamino)uracil</name>
        <dbReference type="ChEBI" id="CHEBI:15934"/>
    </ligand>
</feature>
<feature type="binding site" evidence="1">
    <location>
        <begin position="81"/>
        <end position="83"/>
    </location>
    <ligand>
        <name>5-amino-6-(D-ribitylamino)uracil</name>
        <dbReference type="ChEBI" id="CHEBI:15934"/>
    </ligand>
</feature>
<feature type="binding site" evidence="1">
    <location>
        <begin position="86"/>
        <end position="87"/>
    </location>
    <ligand>
        <name>(2S)-2-hydroxy-3-oxobutyl phosphate</name>
        <dbReference type="ChEBI" id="CHEBI:58830"/>
    </ligand>
</feature>
<feature type="binding site" evidence="1">
    <location>
        <position position="114"/>
    </location>
    <ligand>
        <name>5-amino-6-(D-ribitylamino)uracil</name>
        <dbReference type="ChEBI" id="CHEBI:15934"/>
    </ligand>
</feature>
<feature type="binding site" evidence="1">
    <location>
        <position position="128"/>
    </location>
    <ligand>
        <name>(2S)-2-hydroxy-3-oxobutyl phosphate</name>
        <dbReference type="ChEBI" id="CHEBI:58830"/>
    </ligand>
</feature>
<keyword id="KW-0686">Riboflavin biosynthesis</keyword>
<keyword id="KW-0808">Transferase</keyword>
<dbReference type="EC" id="2.5.1.78" evidence="1"/>
<dbReference type="EMBL" id="CP000325">
    <property type="protein sequence ID" value="ABL04286.1"/>
    <property type="molecule type" value="Genomic_DNA"/>
</dbReference>
<dbReference type="RefSeq" id="WP_011739906.1">
    <property type="nucleotide sequence ID" value="NC_008611.1"/>
</dbReference>
<dbReference type="SMR" id="A0PPL7"/>
<dbReference type="KEGG" id="mul:MUL_1810"/>
<dbReference type="eggNOG" id="COG0054">
    <property type="taxonomic scope" value="Bacteria"/>
</dbReference>
<dbReference type="HOGENOM" id="CLU_089358_1_2_11"/>
<dbReference type="UniPathway" id="UPA00275">
    <property type="reaction ID" value="UER00404"/>
</dbReference>
<dbReference type="Proteomes" id="UP000000765">
    <property type="component" value="Chromosome"/>
</dbReference>
<dbReference type="GO" id="GO:0005829">
    <property type="term" value="C:cytosol"/>
    <property type="evidence" value="ECO:0007669"/>
    <property type="project" value="TreeGrafter"/>
</dbReference>
<dbReference type="GO" id="GO:0009349">
    <property type="term" value="C:riboflavin synthase complex"/>
    <property type="evidence" value="ECO:0007669"/>
    <property type="project" value="InterPro"/>
</dbReference>
<dbReference type="GO" id="GO:0000906">
    <property type="term" value="F:6,7-dimethyl-8-ribityllumazine synthase activity"/>
    <property type="evidence" value="ECO:0007669"/>
    <property type="project" value="UniProtKB-UniRule"/>
</dbReference>
<dbReference type="GO" id="GO:0009231">
    <property type="term" value="P:riboflavin biosynthetic process"/>
    <property type="evidence" value="ECO:0007669"/>
    <property type="project" value="UniProtKB-UniRule"/>
</dbReference>
<dbReference type="CDD" id="cd09209">
    <property type="entry name" value="Lumazine_synthase-I"/>
    <property type="match status" value="1"/>
</dbReference>
<dbReference type="Gene3D" id="3.40.50.960">
    <property type="entry name" value="Lumazine/riboflavin synthase"/>
    <property type="match status" value="1"/>
</dbReference>
<dbReference type="HAMAP" id="MF_00178">
    <property type="entry name" value="Lumazine_synth"/>
    <property type="match status" value="1"/>
</dbReference>
<dbReference type="InterPro" id="IPR034964">
    <property type="entry name" value="LS"/>
</dbReference>
<dbReference type="InterPro" id="IPR002180">
    <property type="entry name" value="LS/RS"/>
</dbReference>
<dbReference type="InterPro" id="IPR036467">
    <property type="entry name" value="LS/RS_sf"/>
</dbReference>
<dbReference type="NCBIfam" id="TIGR00114">
    <property type="entry name" value="lumazine-synth"/>
    <property type="match status" value="1"/>
</dbReference>
<dbReference type="PANTHER" id="PTHR21058:SF0">
    <property type="entry name" value="6,7-DIMETHYL-8-RIBITYLLUMAZINE SYNTHASE"/>
    <property type="match status" value="1"/>
</dbReference>
<dbReference type="PANTHER" id="PTHR21058">
    <property type="entry name" value="6,7-DIMETHYL-8-RIBITYLLUMAZINE SYNTHASE DMRL SYNTHASE LUMAZINE SYNTHASE"/>
    <property type="match status" value="1"/>
</dbReference>
<dbReference type="Pfam" id="PF00885">
    <property type="entry name" value="DMRL_synthase"/>
    <property type="match status" value="1"/>
</dbReference>
<dbReference type="SUPFAM" id="SSF52121">
    <property type="entry name" value="Lumazine synthase"/>
    <property type="match status" value="1"/>
</dbReference>
<sequence length="160" mass="16458">MSGGAGIPDVPAFDASGVRLAIVASTWHTKICDALLAGARNTAADSGIDNPTVVRVLGAIEIPVVAQELTRNHDAVVALGVVIRGETPHFDYVCDVVTQGLTRVSLDSSTPVANGVLTTNSEEQALNRAGLPTSDEDKGAQATAAALTTALTLRELRAES</sequence>
<evidence type="ECO:0000255" key="1">
    <source>
        <dbReference type="HAMAP-Rule" id="MF_00178"/>
    </source>
</evidence>
<reference key="1">
    <citation type="journal article" date="2007" name="Genome Res.">
        <title>Reductive evolution and niche adaptation inferred from the genome of Mycobacterium ulcerans, the causative agent of Buruli ulcer.</title>
        <authorList>
            <person name="Stinear T.P."/>
            <person name="Seemann T."/>
            <person name="Pidot S."/>
            <person name="Frigui W."/>
            <person name="Reysset G."/>
            <person name="Garnier T."/>
            <person name="Meurice G."/>
            <person name="Simon D."/>
            <person name="Bouchier C."/>
            <person name="Ma L."/>
            <person name="Tichit M."/>
            <person name="Porter J.L."/>
            <person name="Ryan J."/>
            <person name="Johnson P.D.R."/>
            <person name="Davies J.K."/>
            <person name="Jenkin G.A."/>
            <person name="Small P.L.C."/>
            <person name="Jones L.M."/>
            <person name="Tekaia F."/>
            <person name="Laval F."/>
            <person name="Daffe M."/>
            <person name="Parkhill J."/>
            <person name="Cole S.T."/>
        </authorList>
    </citation>
    <scope>NUCLEOTIDE SEQUENCE [LARGE SCALE GENOMIC DNA]</scope>
    <source>
        <strain>Agy99</strain>
    </source>
</reference>
<gene>
    <name evidence="1" type="primary">ribH</name>
    <name type="ordered locus">MUL_1810</name>
</gene>
<proteinExistence type="inferred from homology"/>
<protein>
    <recommendedName>
        <fullName evidence="1">6,7-dimethyl-8-ribityllumazine synthase</fullName>
        <shortName evidence="1">DMRL synthase</shortName>
        <shortName evidence="1">LS</shortName>
        <shortName evidence="1">Lumazine synthase</shortName>
        <ecNumber evidence="1">2.5.1.78</ecNumber>
    </recommendedName>
</protein>
<name>RISB_MYCUA</name>
<organism>
    <name type="scientific">Mycobacterium ulcerans (strain Agy99)</name>
    <dbReference type="NCBI Taxonomy" id="362242"/>
    <lineage>
        <taxon>Bacteria</taxon>
        <taxon>Bacillati</taxon>
        <taxon>Actinomycetota</taxon>
        <taxon>Actinomycetes</taxon>
        <taxon>Mycobacteriales</taxon>
        <taxon>Mycobacteriaceae</taxon>
        <taxon>Mycobacterium</taxon>
        <taxon>Mycobacterium ulcerans group</taxon>
    </lineage>
</organism>
<accession>A0PPL7</accession>